<comment type="catalytic activity">
    <reaction evidence="1">
        <text>tRNA(Gly) + glycine + ATP = glycyl-tRNA(Gly) + AMP + diphosphate</text>
        <dbReference type="Rhea" id="RHEA:16013"/>
        <dbReference type="Rhea" id="RHEA-COMP:9664"/>
        <dbReference type="Rhea" id="RHEA-COMP:9683"/>
        <dbReference type="ChEBI" id="CHEBI:30616"/>
        <dbReference type="ChEBI" id="CHEBI:33019"/>
        <dbReference type="ChEBI" id="CHEBI:57305"/>
        <dbReference type="ChEBI" id="CHEBI:78442"/>
        <dbReference type="ChEBI" id="CHEBI:78522"/>
        <dbReference type="ChEBI" id="CHEBI:456215"/>
        <dbReference type="EC" id="6.1.1.14"/>
    </reaction>
</comment>
<comment type="subunit">
    <text evidence="1">Tetramer of two alpha and two beta subunits.</text>
</comment>
<comment type="subcellular location">
    <subcellularLocation>
        <location evidence="1">Cytoplasm</location>
    </subcellularLocation>
</comment>
<comment type="similarity">
    <text evidence="1">Belongs to the class-II aminoacyl-tRNA synthetase family.</text>
</comment>
<gene>
    <name evidence="1" type="primary">glyS</name>
    <name type="ordered locus">PFLU_0010</name>
</gene>
<keyword id="KW-0030">Aminoacyl-tRNA synthetase</keyword>
<keyword id="KW-0067">ATP-binding</keyword>
<keyword id="KW-0963">Cytoplasm</keyword>
<keyword id="KW-0436">Ligase</keyword>
<keyword id="KW-0547">Nucleotide-binding</keyword>
<keyword id="KW-0648">Protein biosynthesis</keyword>
<accession>C3KE40</accession>
<reference key="1">
    <citation type="journal article" date="2009" name="Genome Biol.">
        <title>Genomic and genetic analyses of diversity and plant interactions of Pseudomonas fluorescens.</title>
        <authorList>
            <person name="Silby M.W."/>
            <person name="Cerdeno-Tarraga A.M."/>
            <person name="Vernikos G.S."/>
            <person name="Giddens S.R."/>
            <person name="Jackson R.W."/>
            <person name="Preston G.M."/>
            <person name="Zhang X.-X."/>
            <person name="Moon C.D."/>
            <person name="Gehrig S.M."/>
            <person name="Godfrey S.A.C."/>
            <person name="Knight C.G."/>
            <person name="Malone J.G."/>
            <person name="Robinson Z."/>
            <person name="Spiers A.J."/>
            <person name="Harris S."/>
            <person name="Challis G.L."/>
            <person name="Yaxley A.M."/>
            <person name="Harris D."/>
            <person name="Seeger K."/>
            <person name="Murphy L."/>
            <person name="Rutter S."/>
            <person name="Squares R."/>
            <person name="Quail M.A."/>
            <person name="Saunders E."/>
            <person name="Mavromatis K."/>
            <person name="Brettin T.S."/>
            <person name="Bentley S.D."/>
            <person name="Hothersall J."/>
            <person name="Stephens E."/>
            <person name="Thomas C.M."/>
            <person name="Parkhill J."/>
            <person name="Levy S.B."/>
            <person name="Rainey P.B."/>
            <person name="Thomson N.R."/>
        </authorList>
    </citation>
    <scope>NUCLEOTIDE SEQUENCE [LARGE SCALE GENOMIC DNA]</scope>
    <source>
        <strain>SBW25</strain>
    </source>
</reference>
<protein>
    <recommendedName>
        <fullName evidence="1">Glycine--tRNA ligase beta subunit</fullName>
        <ecNumber evidence="1">6.1.1.14</ecNumber>
    </recommendedName>
    <alternativeName>
        <fullName evidence="1">Glycyl-tRNA synthetase beta subunit</fullName>
        <shortName evidence="1">GlyRS</shortName>
    </alternativeName>
</protein>
<proteinExistence type="inferred from homology"/>
<sequence length="684" mass="74880">MSAQDFLVELGTEELPPKALNTLADAFLAGIEKGLHSAGLKFEAKKVYAAPRRLAVLLTALETQQPDRSINLDGPPRQAAFDAEGNPTQAALGFAKKCGVELSEIDQSGPKLRFSQVITGKPTASLLPTIVEDSLNDLPIPKRMRWGARKEEFVRPTQWLVMLLGDQVIDCTLLAQKAGRDSRGHRFHHPQAVRITSPANYAADLRAAYVLADANERRELISKRTEELARLQEGTAIVPPSLLDEVTALVEWPVPLVCSFEERFLDVPQEALITTMQDNQKYFCLLDVDGKLLPRFITVANIESKDPQQIIAGNEKVVRPRLTDAEFFFKQDKKQKLEDFNLRLQNVVFQEKLGSVYDKAVRVSKLAAYIAQRIGGDAAWAARAGLLSKCDLATEMVGEFPEMQGVAGYYYALNDGEPDDVALALNEQYMPRGAGAELPTTLTGAAVAIADKLDTLVGIFGIGMLPTGSKDPYALRRAALGVLRILIDKKLDLDLTQAVVFAVGQFGAKVKQAGLAEQVLEFVFDRLRARYEDEGVDVSVYLSVRALQPGSALDFDQRVQAVQAFRKLPEADALASVNKRVSNLLSKAEGLGNADVDPGLFADAKEFSLNSAIAKAENAVKPLIAERNYAEALARLATLREPVDAFFEAVMINAEDAGVRKNRYAMLARLRGLFVNIADISTLS</sequence>
<organism>
    <name type="scientific">Pseudomonas fluorescens (strain SBW25)</name>
    <dbReference type="NCBI Taxonomy" id="216595"/>
    <lineage>
        <taxon>Bacteria</taxon>
        <taxon>Pseudomonadati</taxon>
        <taxon>Pseudomonadota</taxon>
        <taxon>Gammaproteobacteria</taxon>
        <taxon>Pseudomonadales</taxon>
        <taxon>Pseudomonadaceae</taxon>
        <taxon>Pseudomonas</taxon>
    </lineage>
</organism>
<evidence type="ECO:0000255" key="1">
    <source>
        <dbReference type="HAMAP-Rule" id="MF_00255"/>
    </source>
</evidence>
<dbReference type="EC" id="6.1.1.14" evidence="1"/>
<dbReference type="EMBL" id="AM181176">
    <property type="protein sequence ID" value="CAY46295.1"/>
    <property type="molecule type" value="Genomic_DNA"/>
</dbReference>
<dbReference type="RefSeq" id="WP_012721459.1">
    <property type="nucleotide sequence ID" value="NC_012660.1"/>
</dbReference>
<dbReference type="SMR" id="C3KE40"/>
<dbReference type="STRING" id="294.SRM1_00064"/>
<dbReference type="PATRIC" id="fig|216595.4.peg.252"/>
<dbReference type="eggNOG" id="COG0751">
    <property type="taxonomic scope" value="Bacteria"/>
</dbReference>
<dbReference type="HOGENOM" id="CLU_007220_2_2_6"/>
<dbReference type="OrthoDB" id="9775440at2"/>
<dbReference type="GO" id="GO:0005829">
    <property type="term" value="C:cytosol"/>
    <property type="evidence" value="ECO:0007669"/>
    <property type="project" value="TreeGrafter"/>
</dbReference>
<dbReference type="GO" id="GO:0004814">
    <property type="term" value="F:arginine-tRNA ligase activity"/>
    <property type="evidence" value="ECO:0007669"/>
    <property type="project" value="InterPro"/>
</dbReference>
<dbReference type="GO" id="GO:0005524">
    <property type="term" value="F:ATP binding"/>
    <property type="evidence" value="ECO:0007669"/>
    <property type="project" value="UniProtKB-UniRule"/>
</dbReference>
<dbReference type="GO" id="GO:0004820">
    <property type="term" value="F:glycine-tRNA ligase activity"/>
    <property type="evidence" value="ECO:0007669"/>
    <property type="project" value="UniProtKB-UniRule"/>
</dbReference>
<dbReference type="GO" id="GO:0006420">
    <property type="term" value="P:arginyl-tRNA aminoacylation"/>
    <property type="evidence" value="ECO:0007669"/>
    <property type="project" value="InterPro"/>
</dbReference>
<dbReference type="GO" id="GO:0006426">
    <property type="term" value="P:glycyl-tRNA aminoacylation"/>
    <property type="evidence" value="ECO:0007669"/>
    <property type="project" value="UniProtKB-UniRule"/>
</dbReference>
<dbReference type="HAMAP" id="MF_00255">
    <property type="entry name" value="Gly_tRNA_synth_beta"/>
    <property type="match status" value="1"/>
</dbReference>
<dbReference type="InterPro" id="IPR008909">
    <property type="entry name" value="DALR_anticod-bd"/>
</dbReference>
<dbReference type="InterPro" id="IPR015944">
    <property type="entry name" value="Gly-tRNA-synth_bsu"/>
</dbReference>
<dbReference type="InterPro" id="IPR006194">
    <property type="entry name" value="Gly-tRNA-synth_heterodimer"/>
</dbReference>
<dbReference type="NCBIfam" id="TIGR00211">
    <property type="entry name" value="glyS"/>
    <property type="match status" value="1"/>
</dbReference>
<dbReference type="PANTHER" id="PTHR30075:SF2">
    <property type="entry name" value="GLYCINE--TRNA LIGASE, CHLOROPLASTIC_MITOCHONDRIAL 2"/>
    <property type="match status" value="1"/>
</dbReference>
<dbReference type="PANTHER" id="PTHR30075">
    <property type="entry name" value="GLYCYL-TRNA SYNTHETASE"/>
    <property type="match status" value="1"/>
</dbReference>
<dbReference type="Pfam" id="PF05746">
    <property type="entry name" value="DALR_1"/>
    <property type="match status" value="1"/>
</dbReference>
<dbReference type="Pfam" id="PF02092">
    <property type="entry name" value="tRNA_synt_2f"/>
    <property type="match status" value="1"/>
</dbReference>
<dbReference type="PRINTS" id="PR01045">
    <property type="entry name" value="TRNASYNTHGB"/>
</dbReference>
<dbReference type="SUPFAM" id="SSF109604">
    <property type="entry name" value="HD-domain/PDEase-like"/>
    <property type="match status" value="1"/>
</dbReference>
<dbReference type="PROSITE" id="PS50861">
    <property type="entry name" value="AA_TRNA_LIGASE_II_GLYAB"/>
    <property type="match status" value="1"/>
</dbReference>
<name>SYGB_PSEFS</name>
<feature type="chain" id="PRO_1000204609" description="Glycine--tRNA ligase beta subunit">
    <location>
        <begin position="1"/>
        <end position="684"/>
    </location>
</feature>